<gene>
    <name type="primary">BHLH87</name>
    <name type="synonym">EN121</name>
    <name type="ordered locus">At3g21330</name>
    <name type="ORF">MHC9.1</name>
</gene>
<keyword id="KW-0238">DNA-binding</keyword>
<keyword id="KW-0539">Nucleus</keyword>
<keyword id="KW-1185">Reference proteome</keyword>
<keyword id="KW-0804">Transcription</keyword>
<keyword id="KW-0805">Transcription regulation</keyword>
<accession>Q8S3D2</accession>
<accession>Q84W35</accession>
<accession>Q9LIG3</accession>
<evidence type="ECO:0000255" key="1">
    <source>
        <dbReference type="PROSITE-ProRule" id="PRU00981"/>
    </source>
</evidence>
<evidence type="ECO:0000256" key="2">
    <source>
        <dbReference type="SAM" id="MobiDB-lite"/>
    </source>
</evidence>
<evidence type="ECO:0000269" key="3">
    <source>
    </source>
</evidence>
<evidence type="ECO:0000305" key="4"/>
<reference key="1">
    <citation type="journal article" date="2003" name="Mol. Biol. Evol.">
        <title>The basic helix-loop-helix transcription factor family in plants: a genome-wide study of protein structure and functional diversity.</title>
        <authorList>
            <person name="Heim M.A."/>
            <person name="Jakoby M."/>
            <person name="Werber M."/>
            <person name="Martin C."/>
            <person name="Weisshaar B."/>
            <person name="Bailey P.C."/>
        </authorList>
    </citation>
    <scope>NUCLEOTIDE SEQUENCE [MRNA]</scope>
    <scope>TISSUE SPECIFICITY</scope>
    <scope>GENE FAMILY</scope>
    <scope>NOMENCLATURE</scope>
    <source>
        <strain>cv. Columbia</strain>
        <tissue>Flower</tissue>
    </source>
</reference>
<reference key="2">
    <citation type="journal article" date="2000" name="DNA Res.">
        <title>Structural analysis of Arabidopsis thaliana chromosome 3. II. Sequence features of the 4,251,695 bp regions covered by 90 P1, TAC and BAC clones.</title>
        <authorList>
            <person name="Kaneko T."/>
            <person name="Katoh T."/>
            <person name="Sato S."/>
            <person name="Nakamura Y."/>
            <person name="Asamizu E."/>
            <person name="Tabata S."/>
        </authorList>
    </citation>
    <scope>NUCLEOTIDE SEQUENCE [LARGE SCALE GENOMIC DNA]</scope>
    <source>
        <strain>cv. Columbia</strain>
    </source>
</reference>
<reference key="3">
    <citation type="journal article" date="2017" name="Plant J.">
        <title>Araport11: a complete reannotation of the Arabidopsis thaliana reference genome.</title>
        <authorList>
            <person name="Cheng C.Y."/>
            <person name="Krishnakumar V."/>
            <person name="Chan A.P."/>
            <person name="Thibaud-Nissen F."/>
            <person name="Schobel S."/>
            <person name="Town C.D."/>
        </authorList>
    </citation>
    <scope>GENOME REANNOTATION</scope>
    <source>
        <strain>cv. Columbia</strain>
    </source>
</reference>
<reference key="4">
    <citation type="journal article" date="2003" name="Science">
        <title>Empirical analysis of transcriptional activity in the Arabidopsis genome.</title>
        <authorList>
            <person name="Yamada K."/>
            <person name="Lim J."/>
            <person name="Dale J.M."/>
            <person name="Chen H."/>
            <person name="Shinn P."/>
            <person name="Palm C.J."/>
            <person name="Southwick A.M."/>
            <person name="Wu H.C."/>
            <person name="Kim C.J."/>
            <person name="Nguyen M."/>
            <person name="Pham P.K."/>
            <person name="Cheuk R.F."/>
            <person name="Karlin-Newmann G."/>
            <person name="Liu S.X."/>
            <person name="Lam B."/>
            <person name="Sakano H."/>
            <person name="Wu T."/>
            <person name="Yu G."/>
            <person name="Miranda M."/>
            <person name="Quach H.L."/>
            <person name="Tripp M."/>
            <person name="Chang C.H."/>
            <person name="Lee J.M."/>
            <person name="Toriumi M.J."/>
            <person name="Chan M.M."/>
            <person name="Tang C.C."/>
            <person name="Onodera C.S."/>
            <person name="Deng J.M."/>
            <person name="Akiyama K."/>
            <person name="Ansari Y."/>
            <person name="Arakawa T."/>
            <person name="Banh J."/>
            <person name="Banno F."/>
            <person name="Bowser L."/>
            <person name="Brooks S.Y."/>
            <person name="Carninci P."/>
            <person name="Chao Q."/>
            <person name="Choy N."/>
            <person name="Enju A."/>
            <person name="Goldsmith A.D."/>
            <person name="Gurjal M."/>
            <person name="Hansen N.F."/>
            <person name="Hayashizaki Y."/>
            <person name="Johnson-Hopson C."/>
            <person name="Hsuan V.W."/>
            <person name="Iida K."/>
            <person name="Karnes M."/>
            <person name="Khan S."/>
            <person name="Koesema E."/>
            <person name="Ishida J."/>
            <person name="Jiang P.X."/>
            <person name="Jones T."/>
            <person name="Kawai J."/>
            <person name="Kamiya A."/>
            <person name="Meyers C."/>
            <person name="Nakajima M."/>
            <person name="Narusaka M."/>
            <person name="Seki M."/>
            <person name="Sakurai T."/>
            <person name="Satou M."/>
            <person name="Tamse R."/>
            <person name="Vaysberg M."/>
            <person name="Wallender E.K."/>
            <person name="Wong C."/>
            <person name="Yamamura Y."/>
            <person name="Yuan S."/>
            <person name="Shinozaki K."/>
            <person name="Davis R.W."/>
            <person name="Theologis A."/>
            <person name="Ecker J.R."/>
        </authorList>
    </citation>
    <scope>NUCLEOTIDE SEQUENCE [LARGE SCALE MRNA]</scope>
    <source>
        <strain>cv. Columbia</strain>
    </source>
</reference>
<reference key="5">
    <citation type="submission" date="2004-12" db="EMBL/GenBank/DDBJ databases">
        <title>Arabidopsis ORF clones.</title>
        <authorList>
            <person name="Kim C.J."/>
            <person name="Chen H."/>
            <person name="Cheuk R."/>
            <person name="Shinn P."/>
            <person name="Ecker J.R."/>
        </authorList>
    </citation>
    <scope>NUCLEOTIDE SEQUENCE [LARGE SCALE MRNA]</scope>
    <source>
        <strain>cv. Columbia</strain>
    </source>
</reference>
<reference key="6">
    <citation type="journal article" date="2003" name="Plant Cell">
        <title>The Arabidopsis basic/helix-loop-helix transcription factor family.</title>
        <authorList>
            <person name="Toledo-Ortiz G."/>
            <person name="Huq E."/>
            <person name="Quail P.H."/>
        </authorList>
    </citation>
    <scope>GENE FAMILY</scope>
</reference>
<reference key="7">
    <citation type="journal article" date="2003" name="Plant Cell">
        <title>Update on the basic helix-loop-helix transcription factor gene family in Arabidopsis thaliana.</title>
        <authorList>
            <person name="Bailey P.C."/>
            <person name="Martin C."/>
            <person name="Toledo-Ortiz G."/>
            <person name="Quail P.H."/>
            <person name="Huq E."/>
            <person name="Heim M.A."/>
            <person name="Jakoby M."/>
            <person name="Werber M."/>
            <person name="Weisshaar B."/>
        </authorList>
    </citation>
    <scope>GENE FAMILY</scope>
    <scope>NOMENCLATURE</scope>
</reference>
<feature type="chain" id="PRO_0000358779" description="Transcription factor bHLH87">
    <location>
        <begin position="1"/>
        <end position="373"/>
    </location>
</feature>
<feature type="domain" description="bHLH" evidence="1">
    <location>
        <begin position="275"/>
        <end position="324"/>
    </location>
</feature>
<feature type="region of interest" description="Disordered" evidence="2">
    <location>
        <begin position="127"/>
        <end position="227"/>
    </location>
</feature>
<feature type="compositionally biased region" description="Basic and acidic residues" evidence="2">
    <location>
        <begin position="188"/>
        <end position="218"/>
    </location>
</feature>
<feature type="sequence conflict" description="In Ref. 4; AAO42279." evidence="4" ref="4">
    <original>L</original>
    <variation>F</variation>
    <location>
        <position position="321"/>
    </location>
</feature>
<protein>
    <recommendedName>
        <fullName>Transcription factor bHLH87</fullName>
    </recommendedName>
    <alternativeName>
        <fullName>Basic helix-loop-helix protein 87</fullName>
        <shortName>AtbHLH87</shortName>
        <shortName>bHLH 87</shortName>
    </alternativeName>
    <alternativeName>
        <fullName>Transcription factor EN 121</fullName>
    </alternativeName>
    <alternativeName>
        <fullName>bHLH transcription factor bHLH087</fullName>
    </alternativeName>
</protein>
<organism>
    <name type="scientific">Arabidopsis thaliana</name>
    <name type="common">Mouse-ear cress</name>
    <dbReference type="NCBI Taxonomy" id="3702"/>
    <lineage>
        <taxon>Eukaryota</taxon>
        <taxon>Viridiplantae</taxon>
        <taxon>Streptophyta</taxon>
        <taxon>Embryophyta</taxon>
        <taxon>Tracheophyta</taxon>
        <taxon>Spermatophyta</taxon>
        <taxon>Magnoliopsida</taxon>
        <taxon>eudicotyledons</taxon>
        <taxon>Gunneridae</taxon>
        <taxon>Pentapetalae</taxon>
        <taxon>rosids</taxon>
        <taxon>malvids</taxon>
        <taxon>Brassicales</taxon>
        <taxon>Brassicaceae</taxon>
        <taxon>Camelineae</taxon>
        <taxon>Arabidopsis</taxon>
    </lineage>
</organism>
<dbReference type="EMBL" id="AF488617">
    <property type="protein sequence ID" value="AAM10960.1"/>
    <property type="molecule type" value="mRNA"/>
</dbReference>
<dbReference type="EMBL" id="AP001305">
    <property type="protein sequence ID" value="BAB03046.1"/>
    <property type="status" value="ALT_SEQ"/>
    <property type="molecule type" value="Genomic_DNA"/>
</dbReference>
<dbReference type="EMBL" id="CP002686">
    <property type="protein sequence ID" value="AEE76493.1"/>
    <property type="molecule type" value="Genomic_DNA"/>
</dbReference>
<dbReference type="EMBL" id="BT004279">
    <property type="protein sequence ID" value="AAO42279.1"/>
    <property type="molecule type" value="mRNA"/>
</dbReference>
<dbReference type="EMBL" id="BT020364">
    <property type="protein sequence ID" value="AAV85719.1"/>
    <property type="molecule type" value="mRNA"/>
</dbReference>
<dbReference type="RefSeq" id="NP_188770.1">
    <property type="nucleotide sequence ID" value="NM_113028.3"/>
</dbReference>
<dbReference type="SMR" id="Q8S3D2"/>
<dbReference type="BioGRID" id="7019">
    <property type="interactions" value="21"/>
</dbReference>
<dbReference type="FunCoup" id="Q8S3D2">
    <property type="interactions" value="113"/>
</dbReference>
<dbReference type="IntAct" id="Q8S3D2">
    <property type="interactions" value="22"/>
</dbReference>
<dbReference type="STRING" id="3702.Q8S3D2"/>
<dbReference type="PaxDb" id="3702-AT3G21330.1"/>
<dbReference type="EnsemblPlants" id="AT3G21330.1">
    <property type="protein sequence ID" value="AT3G21330.1"/>
    <property type="gene ID" value="AT3G21330"/>
</dbReference>
<dbReference type="GeneID" id="821687"/>
<dbReference type="Gramene" id="AT3G21330.1">
    <property type="protein sequence ID" value="AT3G21330.1"/>
    <property type="gene ID" value="AT3G21330"/>
</dbReference>
<dbReference type="KEGG" id="ath:AT3G21330"/>
<dbReference type="Araport" id="AT3G21330"/>
<dbReference type="TAIR" id="AT3G21330"/>
<dbReference type="eggNOG" id="ENOG502QR69">
    <property type="taxonomic scope" value="Eukaryota"/>
</dbReference>
<dbReference type="HOGENOM" id="CLU_045758_0_0_1"/>
<dbReference type="InParanoid" id="Q8S3D2"/>
<dbReference type="OMA" id="MVERPKR"/>
<dbReference type="PhylomeDB" id="Q8S3D2"/>
<dbReference type="PRO" id="PR:Q8S3D2"/>
<dbReference type="Proteomes" id="UP000006548">
    <property type="component" value="Chromosome 3"/>
</dbReference>
<dbReference type="ExpressionAtlas" id="Q8S3D2">
    <property type="expression patterns" value="baseline and differential"/>
</dbReference>
<dbReference type="GO" id="GO:0005634">
    <property type="term" value="C:nucleus"/>
    <property type="evidence" value="ECO:0007669"/>
    <property type="project" value="UniProtKB-SubCell"/>
</dbReference>
<dbReference type="GO" id="GO:0003700">
    <property type="term" value="F:DNA-binding transcription factor activity"/>
    <property type="evidence" value="ECO:0000250"/>
    <property type="project" value="TAIR"/>
</dbReference>
<dbReference type="GO" id="GO:0046983">
    <property type="term" value="F:protein dimerization activity"/>
    <property type="evidence" value="ECO:0007669"/>
    <property type="project" value="InterPro"/>
</dbReference>
<dbReference type="GO" id="GO:0000976">
    <property type="term" value="F:transcription cis-regulatory region binding"/>
    <property type="evidence" value="ECO:0000353"/>
    <property type="project" value="TAIR"/>
</dbReference>
<dbReference type="GO" id="GO:0006355">
    <property type="term" value="P:regulation of DNA-templated transcription"/>
    <property type="evidence" value="ECO:0000304"/>
    <property type="project" value="TAIR"/>
</dbReference>
<dbReference type="CDD" id="cd11454">
    <property type="entry name" value="bHLH_AtIND_like"/>
    <property type="match status" value="1"/>
</dbReference>
<dbReference type="FunFam" id="4.10.280.10:FF:000053">
    <property type="entry name" value="BHLH transcription factor"/>
    <property type="match status" value="1"/>
</dbReference>
<dbReference type="Gene3D" id="4.10.280.10">
    <property type="entry name" value="Helix-loop-helix DNA-binding domain"/>
    <property type="match status" value="1"/>
</dbReference>
<dbReference type="InterPro" id="IPR011598">
    <property type="entry name" value="bHLH_dom"/>
</dbReference>
<dbReference type="InterPro" id="IPR036638">
    <property type="entry name" value="HLH_DNA-bd_sf"/>
</dbReference>
<dbReference type="InterPro" id="IPR045843">
    <property type="entry name" value="IND-like"/>
</dbReference>
<dbReference type="PANTHER" id="PTHR45914:SF12">
    <property type="entry name" value="TRANSCRIPTION FACTOR BHLH87"/>
    <property type="match status" value="1"/>
</dbReference>
<dbReference type="PANTHER" id="PTHR45914">
    <property type="entry name" value="TRANSCRIPTION FACTOR HEC3-RELATED"/>
    <property type="match status" value="1"/>
</dbReference>
<dbReference type="Pfam" id="PF00010">
    <property type="entry name" value="HLH"/>
    <property type="match status" value="1"/>
</dbReference>
<dbReference type="SMART" id="SM00353">
    <property type="entry name" value="HLH"/>
    <property type="match status" value="1"/>
</dbReference>
<dbReference type="SUPFAM" id="SSF47459">
    <property type="entry name" value="HLH, helix-loop-helix DNA-binding domain"/>
    <property type="match status" value="1"/>
</dbReference>
<dbReference type="PROSITE" id="PS50888">
    <property type="entry name" value="BHLH"/>
    <property type="match status" value="1"/>
</dbReference>
<comment type="subunit">
    <text evidence="4">Homodimer.</text>
</comment>
<comment type="interaction">
    <interactant intactId="EBI-15194565">
        <id>Q8S3D2</id>
    </interactant>
    <interactant intactId="EBI-4475455">
        <id>Q9FG01</id>
        <label>ATO</label>
    </interactant>
    <organismsDiffer>false</organismsDiffer>
    <experiments>3</experiments>
</comment>
<comment type="interaction">
    <interactant intactId="EBI-15194565">
        <id>Q8S3D2</id>
    </interactant>
    <interactant intactId="EBI-15194247">
        <id>Q9FY69</id>
        <label>BHLH143</label>
    </interactant>
    <organismsDiffer>false</organismsDiffer>
    <experiments>3</experiments>
</comment>
<comment type="interaction">
    <interactant intactId="EBI-15194565">
        <id>Q8S3D2</id>
    </interactant>
    <interactant intactId="EBI-3946459">
        <id>Q9C5X0</id>
        <label>IAA34</label>
    </interactant>
    <organismsDiffer>false</organismsDiffer>
    <experiments>3</experiments>
</comment>
<comment type="subcellular location">
    <subcellularLocation>
        <location evidence="1">Nucleus</location>
    </subcellularLocation>
</comment>
<comment type="tissue specificity">
    <text evidence="3">Flowers.</text>
</comment>
<comment type="sequence caution" evidence="4">
    <conflict type="erroneous gene model prediction">
        <sequence resource="EMBL-CDS" id="BAB03046"/>
    </conflict>
</comment>
<proteinExistence type="evidence at protein level"/>
<name>BH087_ARATH</name>
<sequence>MEGLESVYAQAMYGMTRESKIMEHQGSDLIWGGNELMARELCSSSSYHHQLINPNLSSCFMSDLGVLGEIQQQQHVGNRASSIDPSSLDCLLSATSNSNNTSTEDDEGISVLFSDCQTLWSFGGVSSAESENREITTETTTTIKPKPLKRNRGGDGGTTETTTTTTKPKSLKRNRGDETGSHFSLVHPQDDSEKGGFKLIYDENQSKSKKPRTEKERGGSSNISFQHSTCLSDNVEPDAEAIAQMKEMIYRAAAFRPVNFGLEIVEKPKRKNVKISTDPQTVAARQRRERISEKIRVLQTLVPGGTKMDTASMLDEAANYLKFLRAQVKALENLRPKLDQTNLSFSSAPTSFPLFHPSFLPLQNPNQIHHPEC</sequence>